<name>Y1317_ARATH</name>
<feature type="chain" id="PRO_0000412843" description="B3 domain-containing protein At1g43171">
    <location>
        <begin position="1"/>
        <end position="112"/>
    </location>
</feature>
<feature type="DNA-binding region" description="TF-B3">
    <location>
        <begin position="19"/>
        <end position="112"/>
    </location>
</feature>
<sequence length="112" mass="12801">MLDELDGAMIISKTLTKTDIVGNVALPKAQVMSVLTRMNGVTDEGLDNGFEVQVHDIMEDDLYTVTLKRIDDMKYYFGTGWSTMKHSLDLVEGDVLKLYWDQFENKFIVLNF</sequence>
<evidence type="ECO:0000250" key="1"/>
<protein>
    <recommendedName>
        <fullName>B3 domain-containing protein At1g43171</fullName>
    </recommendedName>
</protein>
<reference key="1">
    <citation type="journal article" date="2000" name="Nature">
        <title>Sequence and analysis of chromosome 1 of the plant Arabidopsis thaliana.</title>
        <authorList>
            <person name="Theologis A."/>
            <person name="Ecker J.R."/>
            <person name="Palm C.J."/>
            <person name="Federspiel N.A."/>
            <person name="Kaul S."/>
            <person name="White O."/>
            <person name="Alonso J."/>
            <person name="Altafi H."/>
            <person name="Araujo R."/>
            <person name="Bowman C.L."/>
            <person name="Brooks S.Y."/>
            <person name="Buehler E."/>
            <person name="Chan A."/>
            <person name="Chao Q."/>
            <person name="Chen H."/>
            <person name="Cheuk R.F."/>
            <person name="Chin C.W."/>
            <person name="Chung M.K."/>
            <person name="Conn L."/>
            <person name="Conway A.B."/>
            <person name="Conway A.R."/>
            <person name="Creasy T.H."/>
            <person name="Dewar K."/>
            <person name="Dunn P."/>
            <person name="Etgu P."/>
            <person name="Feldblyum T.V."/>
            <person name="Feng J.-D."/>
            <person name="Fong B."/>
            <person name="Fujii C.Y."/>
            <person name="Gill J.E."/>
            <person name="Goldsmith A.D."/>
            <person name="Haas B."/>
            <person name="Hansen N.F."/>
            <person name="Hughes B."/>
            <person name="Huizar L."/>
            <person name="Hunter J.L."/>
            <person name="Jenkins J."/>
            <person name="Johnson-Hopson C."/>
            <person name="Khan S."/>
            <person name="Khaykin E."/>
            <person name="Kim C.J."/>
            <person name="Koo H.L."/>
            <person name="Kremenetskaia I."/>
            <person name="Kurtz D.B."/>
            <person name="Kwan A."/>
            <person name="Lam B."/>
            <person name="Langin-Hooper S."/>
            <person name="Lee A."/>
            <person name="Lee J.M."/>
            <person name="Lenz C.A."/>
            <person name="Li J.H."/>
            <person name="Li Y.-P."/>
            <person name="Lin X."/>
            <person name="Liu S.X."/>
            <person name="Liu Z.A."/>
            <person name="Luros J.S."/>
            <person name="Maiti R."/>
            <person name="Marziali A."/>
            <person name="Militscher J."/>
            <person name="Miranda M."/>
            <person name="Nguyen M."/>
            <person name="Nierman W.C."/>
            <person name="Osborne B.I."/>
            <person name="Pai G."/>
            <person name="Peterson J."/>
            <person name="Pham P.K."/>
            <person name="Rizzo M."/>
            <person name="Rooney T."/>
            <person name="Rowley D."/>
            <person name="Sakano H."/>
            <person name="Salzberg S.L."/>
            <person name="Schwartz J.R."/>
            <person name="Shinn P."/>
            <person name="Southwick A.M."/>
            <person name="Sun H."/>
            <person name="Tallon L.J."/>
            <person name="Tambunga G."/>
            <person name="Toriumi M.J."/>
            <person name="Town C.D."/>
            <person name="Utterback T."/>
            <person name="Van Aken S."/>
            <person name="Vaysberg M."/>
            <person name="Vysotskaia V.S."/>
            <person name="Walker M."/>
            <person name="Wu D."/>
            <person name="Yu G."/>
            <person name="Fraser C.M."/>
            <person name="Venter J.C."/>
            <person name="Davis R.W."/>
        </authorList>
    </citation>
    <scope>NUCLEOTIDE SEQUENCE [LARGE SCALE GENOMIC DNA]</scope>
    <source>
        <strain>cv. Columbia</strain>
    </source>
</reference>
<reference key="2">
    <citation type="journal article" date="2017" name="Plant J.">
        <title>Araport11: a complete reannotation of the Arabidopsis thaliana reference genome.</title>
        <authorList>
            <person name="Cheng C.Y."/>
            <person name="Krishnakumar V."/>
            <person name="Chan A.P."/>
            <person name="Thibaud-Nissen F."/>
            <person name="Schobel S."/>
            <person name="Town C.D."/>
        </authorList>
    </citation>
    <scope>GENOME REANNOTATION</scope>
    <source>
        <strain>cv. Columbia</strain>
    </source>
</reference>
<reference key="3">
    <citation type="journal article" date="2006" name="Plant Biotechnol. J.">
        <title>Simultaneous high-throughput recombinational cloning of open reading frames in closed and open configurations.</title>
        <authorList>
            <person name="Underwood B.A."/>
            <person name="Vanderhaeghen R."/>
            <person name="Whitford R."/>
            <person name="Town C.D."/>
            <person name="Hilson P."/>
        </authorList>
    </citation>
    <scope>NUCLEOTIDE SEQUENCE [LARGE SCALE GENOMIC DNA]</scope>
    <source>
        <strain>cv. Columbia</strain>
    </source>
</reference>
<reference key="4">
    <citation type="journal article" date="2007" name="BMC Genomics">
        <title>Experimental validation of novel genes predicted in the un-annotated regions of the Arabidopsis genome.</title>
        <authorList>
            <person name="Moskal W.A. Jr."/>
            <person name="Wu H.C."/>
            <person name="Underwood B.A."/>
            <person name="Wang W."/>
            <person name="Town C.D."/>
            <person name="Xiao Y.-L."/>
        </authorList>
    </citation>
    <scope>NUCLEOTIDE SEQUENCE [LARGE SCALE MRNA]</scope>
    <source>
        <strain>cv. Columbia</strain>
    </source>
</reference>
<reference key="5">
    <citation type="journal article" date="2008" name="Trends Plant Sci.">
        <title>The plant B3 superfamily.</title>
        <authorList>
            <person name="Swaminathan K."/>
            <person name="Peterson K."/>
            <person name="Jack T."/>
        </authorList>
    </citation>
    <scope>GENE FAMILY</scope>
</reference>
<gene>
    <name type="ordered locus">At1g43171</name>
    <name type="ORF">F1I21</name>
</gene>
<organism>
    <name type="scientific">Arabidopsis thaliana</name>
    <name type="common">Mouse-ear cress</name>
    <dbReference type="NCBI Taxonomy" id="3702"/>
    <lineage>
        <taxon>Eukaryota</taxon>
        <taxon>Viridiplantae</taxon>
        <taxon>Streptophyta</taxon>
        <taxon>Embryophyta</taxon>
        <taxon>Tracheophyta</taxon>
        <taxon>Spermatophyta</taxon>
        <taxon>Magnoliopsida</taxon>
        <taxon>eudicotyledons</taxon>
        <taxon>Gunneridae</taxon>
        <taxon>Pentapetalae</taxon>
        <taxon>rosids</taxon>
        <taxon>malvids</taxon>
        <taxon>Brassicales</taxon>
        <taxon>Brassicaceae</taxon>
        <taxon>Camelineae</taxon>
        <taxon>Arabidopsis</taxon>
    </lineage>
</organism>
<proteinExistence type="inferred from homology"/>
<dbReference type="EMBL" id="AC005687">
    <property type="status" value="NOT_ANNOTATED_CDS"/>
    <property type="molecule type" value="Genomic_DNA"/>
</dbReference>
<dbReference type="EMBL" id="CP002684">
    <property type="protein sequence ID" value="AEE31960.1"/>
    <property type="molecule type" value="Genomic_DNA"/>
</dbReference>
<dbReference type="EMBL" id="DQ487438">
    <property type="protein sequence ID" value="ABF59294.1"/>
    <property type="molecule type" value="Genomic_DNA"/>
</dbReference>
<dbReference type="EMBL" id="EF183195">
    <property type="status" value="NOT_ANNOTATED_CDS"/>
    <property type="molecule type" value="mRNA"/>
</dbReference>
<dbReference type="RefSeq" id="NP_001117429.1">
    <property type="nucleotide sequence ID" value="NM_001123957.1"/>
</dbReference>
<dbReference type="SMR" id="Q1G3Z6"/>
<dbReference type="PaxDb" id="3702-AT1G43171.1"/>
<dbReference type="EnsemblPlants" id="AT1G43171.1">
    <property type="protein sequence ID" value="AT1G43171.1"/>
    <property type="gene ID" value="AT1G43171"/>
</dbReference>
<dbReference type="GeneID" id="6241420"/>
<dbReference type="Gramene" id="AT1G43171.1">
    <property type="protein sequence ID" value="AT1G43171.1"/>
    <property type="gene ID" value="AT1G43171"/>
</dbReference>
<dbReference type="KEGG" id="ath:AT1G43171"/>
<dbReference type="Araport" id="AT1G43171"/>
<dbReference type="TAIR" id="AT1G43171"/>
<dbReference type="HOGENOM" id="CLU_162241_0_0_1"/>
<dbReference type="InParanoid" id="Q1G3Z6"/>
<dbReference type="OMA" id="NTDYVQN"/>
<dbReference type="PhylomeDB" id="Q1G3Z6"/>
<dbReference type="PRO" id="PR:Q1G3Z6"/>
<dbReference type="Proteomes" id="UP000006548">
    <property type="component" value="Chromosome 1"/>
</dbReference>
<dbReference type="GO" id="GO:0005634">
    <property type="term" value="C:nucleus"/>
    <property type="evidence" value="ECO:0007669"/>
    <property type="project" value="UniProtKB-SubCell"/>
</dbReference>
<dbReference type="GO" id="GO:0003677">
    <property type="term" value="F:DNA binding"/>
    <property type="evidence" value="ECO:0007669"/>
    <property type="project" value="UniProtKB-KW"/>
</dbReference>
<dbReference type="CDD" id="cd10017">
    <property type="entry name" value="B3_DNA"/>
    <property type="match status" value="1"/>
</dbReference>
<dbReference type="Gene3D" id="2.40.330.10">
    <property type="entry name" value="DNA-binding pseudobarrel domain"/>
    <property type="match status" value="1"/>
</dbReference>
<dbReference type="InterPro" id="IPR003340">
    <property type="entry name" value="B3_DNA-bd"/>
</dbReference>
<dbReference type="InterPro" id="IPR051442">
    <property type="entry name" value="B3_domain"/>
</dbReference>
<dbReference type="InterPro" id="IPR015300">
    <property type="entry name" value="DNA-bd_pseudobarrel_sf"/>
</dbReference>
<dbReference type="PANTHER" id="PTHR34269:SF15">
    <property type="entry name" value="TF-B3 DOMAIN-CONTAINING PROTEIN"/>
    <property type="match status" value="1"/>
</dbReference>
<dbReference type="PANTHER" id="PTHR34269">
    <property type="entry name" value="TRANSCRIPTION FACTOR B3-DOMAIN FAMILY-RELATED"/>
    <property type="match status" value="1"/>
</dbReference>
<dbReference type="SMART" id="SM01019">
    <property type="entry name" value="B3"/>
    <property type="match status" value="1"/>
</dbReference>
<dbReference type="SUPFAM" id="SSF101936">
    <property type="entry name" value="DNA-binding pseudobarrel domain"/>
    <property type="match status" value="1"/>
</dbReference>
<comment type="subcellular location">
    <subcellularLocation>
        <location evidence="1">Nucleus</location>
    </subcellularLocation>
</comment>
<accession>Q1G3Z6</accession>
<keyword id="KW-0238">DNA-binding</keyword>
<keyword id="KW-0539">Nucleus</keyword>
<keyword id="KW-1185">Reference proteome</keyword>
<keyword id="KW-0804">Transcription</keyword>
<keyword id="KW-0805">Transcription regulation</keyword>